<comment type="function">
    <text evidence="6">Visual pigments are the light-absorbing molecules that mediate vision. They consist of an apoprotein, opsin, covalently linked to cis-retinal. May increase spectral sensitivity in dim light.</text>
</comment>
<comment type="subunit">
    <text evidence="2">Monomer. Homodimer. Homotetramer.</text>
</comment>
<comment type="subcellular location">
    <subcellularLocation>
        <location evidence="2">Cell membrane</location>
        <topology evidence="3">Multi-pass membrane protein</topology>
    </subcellularLocation>
</comment>
<comment type="tissue specificity">
    <text evidence="6 8">Expressed in retina (at protein level) (PubMed:30948514). Expressed in cone photoreceptor cells (at protein level) (PubMed:11055434).</text>
</comment>
<comment type="developmental stage">
    <text evidence="7">Expressed in the retinal outer nuclear layer and the inner nuclear layer at postnatal day 10.</text>
</comment>
<comment type="PTM">
    <text evidence="8">N-glycosylated (PubMed:30948514). O-glycosylated (PubMed:30948514).</text>
</comment>
<comment type="PTM">
    <text evidence="1">Phosphorylated on some or all of the serine and threonine residues present in the C-terminal region.</text>
</comment>
<comment type="similarity">
    <text evidence="5">Belongs to the G-protein coupled receptor 1 family. Opsin subfamily.</text>
</comment>
<gene>
    <name type="primary">Opn1mw</name>
    <name type="synonym">Gcp</name>
</gene>
<evidence type="ECO:0000250" key="1"/>
<evidence type="ECO:0000250" key="2">
    <source>
        <dbReference type="UniProtKB" id="P04001"/>
    </source>
</evidence>
<evidence type="ECO:0000255" key="3"/>
<evidence type="ECO:0000255" key="4">
    <source>
        <dbReference type="PROSITE-ProRule" id="PRU00498"/>
    </source>
</evidence>
<evidence type="ECO:0000255" key="5">
    <source>
        <dbReference type="PROSITE-ProRule" id="PRU00521"/>
    </source>
</evidence>
<evidence type="ECO:0000269" key="6">
    <source>
    </source>
</evidence>
<evidence type="ECO:0000269" key="7">
    <source>
    </source>
</evidence>
<evidence type="ECO:0000269" key="8">
    <source>
    </source>
</evidence>
<dbReference type="EMBL" id="AF011389">
    <property type="protein sequence ID" value="AAB64302.1"/>
    <property type="molecule type" value="mRNA"/>
</dbReference>
<dbReference type="EMBL" id="AF190672">
    <property type="protein sequence ID" value="AAG17991.1"/>
    <property type="molecule type" value="mRNA"/>
</dbReference>
<dbReference type="EMBL" id="AF191085">
    <property type="protein sequence ID" value="AAG17992.1"/>
    <property type="molecule type" value="Genomic_DNA"/>
</dbReference>
<dbReference type="EMBL" id="AF191080">
    <property type="protein sequence ID" value="AAG17992.1"/>
    <property type="status" value="JOINED"/>
    <property type="molecule type" value="Genomic_DNA"/>
</dbReference>
<dbReference type="EMBL" id="AF191081">
    <property type="protein sequence ID" value="AAG17992.1"/>
    <property type="status" value="JOINED"/>
    <property type="molecule type" value="Genomic_DNA"/>
</dbReference>
<dbReference type="EMBL" id="AF191082">
    <property type="protein sequence ID" value="AAG17992.1"/>
    <property type="status" value="JOINED"/>
    <property type="molecule type" value="Genomic_DNA"/>
</dbReference>
<dbReference type="EMBL" id="AF191083">
    <property type="protein sequence ID" value="AAG17992.1"/>
    <property type="status" value="JOINED"/>
    <property type="molecule type" value="Genomic_DNA"/>
</dbReference>
<dbReference type="EMBL" id="AF191084">
    <property type="protein sequence ID" value="AAG17992.1"/>
    <property type="status" value="JOINED"/>
    <property type="molecule type" value="Genomic_DNA"/>
</dbReference>
<dbReference type="EMBL" id="BC014826">
    <property type="protein sequence ID" value="AAH14826.1"/>
    <property type="molecule type" value="mRNA"/>
</dbReference>
<dbReference type="CCDS" id="CCDS30220.1"/>
<dbReference type="RefSeq" id="NP_032132.1">
    <property type="nucleotide sequence ID" value="NM_008106.2"/>
</dbReference>
<dbReference type="SMR" id="O35599"/>
<dbReference type="FunCoup" id="O35599">
    <property type="interactions" value="350"/>
</dbReference>
<dbReference type="STRING" id="10090.ENSMUSP00000033771"/>
<dbReference type="GlyCosmos" id="O35599">
    <property type="glycosylation" value="1 site, No reported glycans"/>
</dbReference>
<dbReference type="GlyGen" id="O35599">
    <property type="glycosylation" value="1 site"/>
</dbReference>
<dbReference type="PhosphoSitePlus" id="O35599"/>
<dbReference type="PaxDb" id="10090-ENSMUSP00000033771"/>
<dbReference type="ProteomicsDB" id="294394"/>
<dbReference type="DNASU" id="14539"/>
<dbReference type="Ensembl" id="ENSMUST00000033771.11">
    <property type="protein sequence ID" value="ENSMUSP00000033771.5"/>
    <property type="gene ID" value="ENSMUSG00000031394.12"/>
</dbReference>
<dbReference type="GeneID" id="14539"/>
<dbReference type="KEGG" id="mmu:14539"/>
<dbReference type="UCSC" id="uc009tnv.1">
    <property type="organism name" value="mouse"/>
</dbReference>
<dbReference type="AGR" id="MGI:1097692"/>
<dbReference type="CTD" id="2652"/>
<dbReference type="MGI" id="MGI:1097692">
    <property type="gene designation" value="Opn1mw"/>
</dbReference>
<dbReference type="VEuPathDB" id="HostDB:ENSMUSG00000031394"/>
<dbReference type="eggNOG" id="KOG3656">
    <property type="taxonomic scope" value="Eukaryota"/>
</dbReference>
<dbReference type="GeneTree" id="ENSGT01030000234549"/>
<dbReference type="HOGENOM" id="CLU_009579_3_0_1"/>
<dbReference type="InParanoid" id="O35599"/>
<dbReference type="OMA" id="EWGKQSF"/>
<dbReference type="OrthoDB" id="8545112at2759"/>
<dbReference type="PhylomeDB" id="O35599"/>
<dbReference type="TreeFam" id="TF324998"/>
<dbReference type="Reactome" id="R-MMU-2187335">
    <property type="pathway name" value="The retinoid cycle in cones (daylight vision)"/>
</dbReference>
<dbReference type="Reactome" id="R-MMU-418594">
    <property type="pathway name" value="G alpha (i) signalling events"/>
</dbReference>
<dbReference type="Reactome" id="R-MMU-419771">
    <property type="pathway name" value="Opsins"/>
</dbReference>
<dbReference type="BioGRID-ORCS" id="14539">
    <property type="hits" value="2 hits in 77 CRISPR screens"/>
</dbReference>
<dbReference type="PRO" id="PR:O35599"/>
<dbReference type="Proteomes" id="UP000000589">
    <property type="component" value="Chromosome X"/>
</dbReference>
<dbReference type="RNAct" id="O35599">
    <property type="molecule type" value="protein"/>
</dbReference>
<dbReference type="Bgee" id="ENSMUSG00000031394">
    <property type="expression patterns" value="Expressed in retinal neural layer and 12 other cell types or tissues"/>
</dbReference>
<dbReference type="ExpressionAtlas" id="O35599">
    <property type="expression patterns" value="baseline and differential"/>
</dbReference>
<dbReference type="GO" id="GO:0001750">
    <property type="term" value="C:photoreceptor outer segment"/>
    <property type="evidence" value="ECO:0000314"/>
    <property type="project" value="MGI"/>
</dbReference>
<dbReference type="GO" id="GO:0005886">
    <property type="term" value="C:plasma membrane"/>
    <property type="evidence" value="ECO:0000250"/>
    <property type="project" value="UniProtKB"/>
</dbReference>
<dbReference type="GO" id="GO:0004930">
    <property type="term" value="F:G protein-coupled receptor activity"/>
    <property type="evidence" value="ECO:0007669"/>
    <property type="project" value="UniProtKB-KW"/>
</dbReference>
<dbReference type="GO" id="GO:0042802">
    <property type="term" value="F:identical protein binding"/>
    <property type="evidence" value="ECO:0000250"/>
    <property type="project" value="UniProtKB"/>
</dbReference>
<dbReference type="GO" id="GO:0009881">
    <property type="term" value="F:photoreceptor activity"/>
    <property type="evidence" value="ECO:0007669"/>
    <property type="project" value="UniProtKB-KW"/>
</dbReference>
<dbReference type="GO" id="GO:0007602">
    <property type="term" value="P:phototransduction"/>
    <property type="evidence" value="ECO:0007669"/>
    <property type="project" value="UniProtKB-KW"/>
</dbReference>
<dbReference type="GO" id="GO:0007601">
    <property type="term" value="P:visual perception"/>
    <property type="evidence" value="ECO:0007669"/>
    <property type="project" value="UniProtKB-KW"/>
</dbReference>
<dbReference type="FunFam" id="1.20.1070.10:FF:000090">
    <property type="entry name" value="Long-wave-sensitive opsin 1"/>
    <property type="match status" value="1"/>
</dbReference>
<dbReference type="Gene3D" id="1.20.1070.10">
    <property type="entry name" value="Rhodopsin 7-helix transmembrane proteins"/>
    <property type="match status" value="1"/>
</dbReference>
<dbReference type="InterPro" id="IPR050125">
    <property type="entry name" value="GPCR_opsins"/>
</dbReference>
<dbReference type="InterPro" id="IPR000276">
    <property type="entry name" value="GPCR_Rhodpsn"/>
</dbReference>
<dbReference type="InterPro" id="IPR017452">
    <property type="entry name" value="GPCR_Rhodpsn_7TM"/>
</dbReference>
<dbReference type="InterPro" id="IPR001760">
    <property type="entry name" value="Opsin"/>
</dbReference>
<dbReference type="InterPro" id="IPR000378">
    <property type="entry name" value="Opsin_red/grn"/>
</dbReference>
<dbReference type="InterPro" id="IPR027430">
    <property type="entry name" value="Retinal_BS"/>
</dbReference>
<dbReference type="PANTHER" id="PTHR24240">
    <property type="entry name" value="OPSIN"/>
    <property type="match status" value="1"/>
</dbReference>
<dbReference type="Pfam" id="PF00001">
    <property type="entry name" value="7tm_1"/>
    <property type="match status" value="1"/>
</dbReference>
<dbReference type="PRINTS" id="PR00237">
    <property type="entry name" value="GPCRRHODOPSN"/>
</dbReference>
<dbReference type="PRINTS" id="PR00238">
    <property type="entry name" value="OPSIN"/>
</dbReference>
<dbReference type="PRINTS" id="PR00575">
    <property type="entry name" value="OPSINREDGRN"/>
</dbReference>
<dbReference type="SUPFAM" id="SSF81321">
    <property type="entry name" value="Family A G protein-coupled receptor-like"/>
    <property type="match status" value="1"/>
</dbReference>
<dbReference type="PROSITE" id="PS00237">
    <property type="entry name" value="G_PROTEIN_RECEP_F1_1"/>
    <property type="match status" value="1"/>
</dbReference>
<dbReference type="PROSITE" id="PS50262">
    <property type="entry name" value="G_PROTEIN_RECEP_F1_2"/>
    <property type="match status" value="1"/>
</dbReference>
<dbReference type="PROSITE" id="PS00238">
    <property type="entry name" value="OPSIN"/>
    <property type="match status" value="1"/>
</dbReference>
<keyword id="KW-1003">Cell membrane</keyword>
<keyword id="KW-0157">Chromophore</keyword>
<keyword id="KW-1015">Disulfide bond</keyword>
<keyword id="KW-0297">G-protein coupled receptor</keyword>
<keyword id="KW-0325">Glycoprotein</keyword>
<keyword id="KW-0472">Membrane</keyword>
<keyword id="KW-0597">Phosphoprotein</keyword>
<keyword id="KW-0600">Photoreceptor protein</keyword>
<keyword id="KW-0675">Receptor</keyword>
<keyword id="KW-1185">Reference proteome</keyword>
<keyword id="KW-0681">Retinal protein</keyword>
<keyword id="KW-0716">Sensory transduction</keyword>
<keyword id="KW-0807">Transducer</keyword>
<keyword id="KW-0812">Transmembrane</keyword>
<keyword id="KW-1133">Transmembrane helix</keyword>
<keyword id="KW-0844">Vision</keyword>
<feature type="chain" id="PRO_0000197786" description="Medium-wave-sensitive opsin 1">
    <location>
        <begin position="1"/>
        <end position="359"/>
    </location>
</feature>
<feature type="topological domain" description="Extracellular" evidence="3">
    <location>
        <begin position="1"/>
        <end position="47"/>
    </location>
</feature>
<feature type="transmembrane region" description="Helical; Name=1" evidence="3">
    <location>
        <begin position="48"/>
        <end position="72"/>
    </location>
</feature>
<feature type="topological domain" description="Cytoplasmic" evidence="3">
    <location>
        <begin position="73"/>
        <end position="84"/>
    </location>
</feature>
<feature type="transmembrane region" description="Helical; Name=2" evidence="3">
    <location>
        <begin position="85"/>
        <end position="110"/>
    </location>
</feature>
<feature type="topological domain" description="Extracellular" evidence="3">
    <location>
        <begin position="111"/>
        <end position="124"/>
    </location>
</feature>
<feature type="transmembrane region" description="Helical; Name=3" evidence="3">
    <location>
        <begin position="125"/>
        <end position="144"/>
    </location>
</feature>
<feature type="topological domain" description="Cytoplasmic" evidence="3">
    <location>
        <begin position="145"/>
        <end position="163"/>
    </location>
</feature>
<feature type="transmembrane region" description="Helical; Name=4" evidence="3">
    <location>
        <begin position="164"/>
        <end position="187"/>
    </location>
</feature>
<feature type="topological domain" description="Extracellular" evidence="3">
    <location>
        <begin position="188"/>
        <end position="213"/>
    </location>
</feature>
<feature type="transmembrane region" description="Helical; Name=5" evidence="3">
    <location>
        <begin position="214"/>
        <end position="241"/>
    </location>
</feature>
<feature type="topological domain" description="Cytoplasmic" evidence="3">
    <location>
        <begin position="242"/>
        <end position="263"/>
    </location>
</feature>
<feature type="transmembrane region" description="Helical; Name=6" evidence="3">
    <location>
        <begin position="264"/>
        <end position="287"/>
    </location>
</feature>
<feature type="topological domain" description="Extracellular" evidence="3">
    <location>
        <begin position="288"/>
        <end position="295"/>
    </location>
</feature>
<feature type="transmembrane region" description="Helical; Name=7" evidence="3">
    <location>
        <begin position="296"/>
        <end position="320"/>
    </location>
</feature>
<feature type="topological domain" description="Cytoplasmic" evidence="3">
    <location>
        <begin position="321"/>
        <end position="359"/>
    </location>
</feature>
<feature type="region of interest" description="Required for 11-cis-retinal regeneration" evidence="2">
    <location>
        <begin position="12"/>
        <end position="38"/>
    </location>
</feature>
<feature type="modified residue" description="N6-(retinylidene)lysine">
    <location>
        <position position="307"/>
    </location>
</feature>
<feature type="glycosylation site" description="N-linked (GlcNAc...) asparagine" evidence="4">
    <location>
        <position position="29"/>
    </location>
</feature>
<feature type="disulfide bond" evidence="5">
    <location>
        <begin position="121"/>
        <end position="198"/>
    </location>
</feature>
<proteinExistence type="evidence at protein level"/>
<reference key="1">
    <citation type="journal article" date="1997" name="Proc. Natl. Acad. Sci. U.S.A.">
        <title>Mechanisms of spectral tuning in the mouse green cone pigment.</title>
        <authorList>
            <person name="Sun H."/>
            <person name="Macke J.P."/>
            <person name="Nathans J."/>
        </authorList>
    </citation>
    <scope>NUCLEOTIDE SEQUENCE [MRNA]</scope>
</reference>
<reference key="2">
    <citation type="journal article" date="2000" name="Neuron">
        <title>The murine cone photoreceptor: a single cone type expresses both S and M opsins with retinal spatial patterning.</title>
        <authorList>
            <person name="Applebury M.L."/>
            <person name="Antoch M.P."/>
            <person name="Baxter L.C."/>
            <person name="Chun L.Y."/>
            <person name="Falk J.D."/>
            <person name="Farhangfar F."/>
            <person name="Kage K."/>
            <person name="Krzystolik M.G."/>
            <person name="Lyass L.A."/>
            <person name="Robbins J.T."/>
        </authorList>
    </citation>
    <scope>NUCLEOTIDE SEQUENCE [GENOMIC DNA / MRNA]</scope>
    <scope>FUNCTION</scope>
    <scope>TISSUE SPECIFICITY</scope>
    <source>
        <strain>BALB/cJ</strain>
        <strain>C57BL/10</strain>
    </source>
</reference>
<reference key="3">
    <citation type="journal article" date="2004" name="Genome Res.">
        <title>The status, quality, and expansion of the NIH full-length cDNA project: the Mammalian Gene Collection (MGC).</title>
        <authorList>
            <consortium name="The MGC Project Team"/>
        </authorList>
    </citation>
    <scope>NUCLEOTIDE SEQUENCE [LARGE SCALE MRNA]</scope>
    <source>
        <strain>C57BL/6J</strain>
        <tissue>Retina</tissue>
    </source>
</reference>
<reference key="4">
    <citation type="journal article" date="2013" name="Hum. Mol. Genet.">
        <title>Loss of CRB2 in the mouse retina mimics human retinitis pigmentosa due to mutations in the CRB1 gene.</title>
        <authorList>
            <person name="Alves C.H."/>
            <person name="Sanz A.S."/>
            <person name="Park B."/>
            <person name="Pellissier L.P."/>
            <person name="Tanimoto N."/>
            <person name="Beck S.C."/>
            <person name="Huber G."/>
            <person name="Murtaza M."/>
            <person name="Richard F."/>
            <person name="Sridevi Gurubaran I."/>
            <person name="Garcia Garrido M."/>
            <person name="Levelt C.N."/>
            <person name="Rashbass P."/>
            <person name="Le Bivic A."/>
            <person name="Seeliger M.W."/>
            <person name="Wijnholds J."/>
        </authorList>
    </citation>
    <scope>DEVELOPMENTAL STAGE</scope>
</reference>
<reference key="5">
    <citation type="journal article" date="2019" name="J. Biol. Chem.">
        <title>Human red and green cone opsins are O-glycosylated at an N-terminal Ser/Thr-rich domain conserved in vertebrates.</title>
        <authorList>
            <person name="Salom D."/>
            <person name="Jin H."/>
            <person name="Gerken T.A."/>
            <person name="Yu C."/>
            <person name="Huang L."/>
            <person name="Palczewski K."/>
        </authorList>
    </citation>
    <scope>TISSUE SPECIFICITY</scope>
    <scope>GLYCOSYLATION</scope>
</reference>
<name>OPSG_MOUSE</name>
<organism>
    <name type="scientific">Mus musculus</name>
    <name type="common">Mouse</name>
    <dbReference type="NCBI Taxonomy" id="10090"/>
    <lineage>
        <taxon>Eukaryota</taxon>
        <taxon>Metazoa</taxon>
        <taxon>Chordata</taxon>
        <taxon>Craniata</taxon>
        <taxon>Vertebrata</taxon>
        <taxon>Euteleostomi</taxon>
        <taxon>Mammalia</taxon>
        <taxon>Eutheria</taxon>
        <taxon>Euarchontoglires</taxon>
        <taxon>Glires</taxon>
        <taxon>Rodentia</taxon>
        <taxon>Myomorpha</taxon>
        <taxon>Muroidea</taxon>
        <taxon>Muridae</taxon>
        <taxon>Murinae</taxon>
        <taxon>Mus</taxon>
        <taxon>Mus</taxon>
    </lineage>
</organism>
<sequence>MAQRLTGEQTLDHYEDSTHASIFTYTNSNSTKGPFEGPNYHIAPRWVYHLTSTWMILVVVASVFTNGLVLAATMRFKKLRHPLNWILVNLAVADLAETIIASTISVVNQIYGYFVLGHPLCVIEGYIVSLCGITGLWSLAIISWERWLVVCKPFGNVRFDAKLATVGIVFSWVWAAIWTAPPIFGWSRYWPYGLKTSCGPDVFSGTSYPGVQSYMMVLMVTCCIFPLSIIVLCYLQVWLAIRAVAKQQKESESTQKAEKEVTRMVVVMVFAYCLCWGPYTFFACFATAHPGYAFHPLVASLPSYFAKSATIYNPIIYVFMNRQFRNCILHLFGKKVDDSSELSSTSKTEVSSVSSVSPA</sequence>
<accession>O35599</accession>
<accession>Q548Z4</accession>
<protein>
    <recommendedName>
        <fullName>Medium-wave-sensitive opsin 1</fullName>
    </recommendedName>
    <alternativeName>
        <fullName>Green cone photoreceptor pigment</fullName>
    </alternativeName>
    <alternativeName>
        <fullName>Green-sensitive opsin</fullName>
        <shortName>M opsin</shortName>
    </alternativeName>
    <alternativeName>
        <fullName>Medium wavelength-sensitive cone opsin</fullName>
    </alternativeName>
</protein>